<feature type="chain" id="PRO_0000284041" description="Histone chaperone ASF1">
    <location>
        <begin position="1"/>
        <end position="265"/>
    </location>
</feature>
<feature type="region of interest" description="Disordered" evidence="2">
    <location>
        <begin position="155"/>
        <end position="265"/>
    </location>
</feature>
<feature type="compositionally biased region" description="Acidic residues" evidence="2">
    <location>
        <begin position="155"/>
        <end position="197"/>
    </location>
</feature>
<feature type="compositionally biased region" description="Acidic residues" evidence="2">
    <location>
        <begin position="204"/>
        <end position="257"/>
    </location>
</feature>
<keyword id="KW-0143">Chaperone</keyword>
<keyword id="KW-0539">Nucleus</keyword>
<keyword id="KW-1185">Reference proteome</keyword>
<keyword id="KW-0804">Transcription</keyword>
<keyword id="KW-0805">Transcription regulation</keyword>
<sequence length="265" mass="29701">MSIVSLLNIDVLNNPAPFGSPYEFQITFECLEPLKHDLEWKLTYVGSSTSFEHDQELDSLLVGPVPVGVNKFVFTADPPTVDLIPASELVSVTVIILSCSYNDREFVRVGYYVNNEYDSEELRLNPPPKVQVDHVVRNILAEKPRVTRFNIVWDNEGEQGEEFPPEQPDADLEDDEEEYGAGEEEEEVEEEVEGETEADAKEDIEAEGEAEAEGDGDGDGDGEDEDLEEASDEEMEVVDDEVGEESEGEDDKEDKDDKDDKKDDK</sequence>
<dbReference type="EMBL" id="CR382127">
    <property type="protein sequence ID" value="CAG83569.1"/>
    <property type="molecule type" value="Genomic_DNA"/>
</dbReference>
<dbReference type="RefSeq" id="XP_499649.1">
    <property type="nucleotide sequence ID" value="XM_499649.1"/>
</dbReference>
<dbReference type="SMR" id="Q6CI62"/>
<dbReference type="FunCoup" id="Q6CI62">
    <property type="interactions" value="851"/>
</dbReference>
<dbReference type="STRING" id="284591.Q6CI62"/>
<dbReference type="EnsemblFungi" id="CAG83569">
    <property type="protein sequence ID" value="CAG83569"/>
    <property type="gene ID" value="YALI0_A01375g"/>
</dbReference>
<dbReference type="KEGG" id="yli:2906074"/>
<dbReference type="VEuPathDB" id="FungiDB:YALI0_A01375g"/>
<dbReference type="HOGENOM" id="CLU_060354_0_2_1"/>
<dbReference type="InParanoid" id="Q6CI62"/>
<dbReference type="OMA" id="CSYDERE"/>
<dbReference type="OrthoDB" id="3797at4891"/>
<dbReference type="Proteomes" id="UP000001300">
    <property type="component" value="Chromosome A"/>
</dbReference>
<dbReference type="GO" id="GO:0000785">
    <property type="term" value="C:chromatin"/>
    <property type="evidence" value="ECO:0000318"/>
    <property type="project" value="GO_Central"/>
</dbReference>
<dbReference type="GO" id="GO:0000781">
    <property type="term" value="C:chromosome, telomeric region"/>
    <property type="evidence" value="ECO:0007669"/>
    <property type="project" value="GOC"/>
</dbReference>
<dbReference type="GO" id="GO:0005829">
    <property type="term" value="C:cytosol"/>
    <property type="evidence" value="ECO:0007669"/>
    <property type="project" value="EnsemblFungi"/>
</dbReference>
<dbReference type="GO" id="GO:0070775">
    <property type="term" value="C:H3 histone acetyltransferase complex"/>
    <property type="evidence" value="ECO:0007669"/>
    <property type="project" value="EnsemblFungi"/>
</dbReference>
<dbReference type="GO" id="GO:0005634">
    <property type="term" value="C:nucleus"/>
    <property type="evidence" value="ECO:0000318"/>
    <property type="project" value="GO_Central"/>
</dbReference>
<dbReference type="GO" id="GO:0010698">
    <property type="term" value="F:acetyltransferase activator activity"/>
    <property type="evidence" value="ECO:0007669"/>
    <property type="project" value="EnsemblFungi"/>
</dbReference>
<dbReference type="GO" id="GO:0042393">
    <property type="term" value="F:histone binding"/>
    <property type="evidence" value="ECO:0000318"/>
    <property type="project" value="GO_Central"/>
</dbReference>
<dbReference type="GO" id="GO:0033554">
    <property type="term" value="P:cellular response to stress"/>
    <property type="evidence" value="ECO:0007669"/>
    <property type="project" value="EnsemblFungi"/>
</dbReference>
<dbReference type="GO" id="GO:0006335">
    <property type="term" value="P:DNA replication-dependent chromatin assembly"/>
    <property type="evidence" value="ECO:0000318"/>
    <property type="project" value="GO_Central"/>
</dbReference>
<dbReference type="GO" id="GO:0006334">
    <property type="term" value="P:nucleosome assembly"/>
    <property type="evidence" value="ECO:0007669"/>
    <property type="project" value="InterPro"/>
</dbReference>
<dbReference type="GO" id="GO:0006337">
    <property type="term" value="P:nucleosome disassembly"/>
    <property type="evidence" value="ECO:0007669"/>
    <property type="project" value="EnsemblFungi"/>
</dbReference>
<dbReference type="GO" id="GO:0032968">
    <property type="term" value="P:positive regulation of transcription elongation by RNA polymerase II"/>
    <property type="evidence" value="ECO:0007669"/>
    <property type="project" value="EnsemblFungi"/>
</dbReference>
<dbReference type="GO" id="GO:0036211">
    <property type="term" value="P:protein modification process"/>
    <property type="evidence" value="ECO:0007669"/>
    <property type="project" value="EnsemblFungi"/>
</dbReference>
<dbReference type="GO" id="GO:0030466">
    <property type="term" value="P:silent mating-type cassette heterochromatin formation"/>
    <property type="evidence" value="ECO:0007669"/>
    <property type="project" value="EnsemblFungi"/>
</dbReference>
<dbReference type="GO" id="GO:0031509">
    <property type="term" value="P:subtelomeric heterochromatin formation"/>
    <property type="evidence" value="ECO:0007669"/>
    <property type="project" value="EnsemblFungi"/>
</dbReference>
<dbReference type="FunFam" id="2.60.40.1490:FF:000001">
    <property type="entry name" value="Histone chaperone ASF1"/>
    <property type="match status" value="1"/>
</dbReference>
<dbReference type="Gene3D" id="2.60.40.1490">
    <property type="entry name" value="Histone chaperone ASF1-like"/>
    <property type="match status" value="1"/>
</dbReference>
<dbReference type="InterPro" id="IPR006818">
    <property type="entry name" value="ASF1-like"/>
</dbReference>
<dbReference type="InterPro" id="IPR036747">
    <property type="entry name" value="ASF1-like_sf"/>
</dbReference>
<dbReference type="InterPro" id="IPR017282">
    <property type="entry name" value="Hist_deposition_Asf1"/>
</dbReference>
<dbReference type="PANTHER" id="PTHR12040">
    <property type="entry name" value="ANTI-SILENCING PROTEIN 1"/>
    <property type="match status" value="1"/>
</dbReference>
<dbReference type="PANTHER" id="PTHR12040:SF0">
    <property type="entry name" value="HISTONE CHAPERONE ASF1"/>
    <property type="match status" value="1"/>
</dbReference>
<dbReference type="Pfam" id="PF04729">
    <property type="entry name" value="ASF1_hist_chap"/>
    <property type="match status" value="1"/>
</dbReference>
<dbReference type="PIRSF" id="PIRSF037759">
    <property type="entry name" value="Histone_Asf1"/>
    <property type="match status" value="1"/>
</dbReference>
<dbReference type="SUPFAM" id="SSF101546">
    <property type="entry name" value="ASF1-like"/>
    <property type="match status" value="1"/>
</dbReference>
<organism>
    <name type="scientific">Yarrowia lipolytica (strain CLIB 122 / E 150)</name>
    <name type="common">Yeast</name>
    <name type="synonym">Candida lipolytica</name>
    <dbReference type="NCBI Taxonomy" id="284591"/>
    <lineage>
        <taxon>Eukaryota</taxon>
        <taxon>Fungi</taxon>
        <taxon>Dikarya</taxon>
        <taxon>Ascomycota</taxon>
        <taxon>Saccharomycotina</taxon>
        <taxon>Dipodascomycetes</taxon>
        <taxon>Dipodascales</taxon>
        <taxon>Dipodascales incertae sedis</taxon>
        <taxon>Yarrowia</taxon>
    </lineage>
</organism>
<evidence type="ECO:0000250" key="1"/>
<evidence type="ECO:0000256" key="2">
    <source>
        <dbReference type="SAM" id="MobiDB-lite"/>
    </source>
</evidence>
<evidence type="ECO:0000305" key="3"/>
<reference key="1">
    <citation type="journal article" date="2004" name="Nature">
        <title>Genome evolution in yeasts.</title>
        <authorList>
            <person name="Dujon B."/>
            <person name="Sherman D."/>
            <person name="Fischer G."/>
            <person name="Durrens P."/>
            <person name="Casaregola S."/>
            <person name="Lafontaine I."/>
            <person name="de Montigny J."/>
            <person name="Marck C."/>
            <person name="Neuveglise C."/>
            <person name="Talla E."/>
            <person name="Goffard N."/>
            <person name="Frangeul L."/>
            <person name="Aigle M."/>
            <person name="Anthouard V."/>
            <person name="Babour A."/>
            <person name="Barbe V."/>
            <person name="Barnay S."/>
            <person name="Blanchin S."/>
            <person name="Beckerich J.-M."/>
            <person name="Beyne E."/>
            <person name="Bleykasten C."/>
            <person name="Boisrame A."/>
            <person name="Boyer J."/>
            <person name="Cattolico L."/>
            <person name="Confanioleri F."/>
            <person name="de Daruvar A."/>
            <person name="Despons L."/>
            <person name="Fabre E."/>
            <person name="Fairhead C."/>
            <person name="Ferry-Dumazet H."/>
            <person name="Groppi A."/>
            <person name="Hantraye F."/>
            <person name="Hennequin C."/>
            <person name="Jauniaux N."/>
            <person name="Joyet P."/>
            <person name="Kachouri R."/>
            <person name="Kerrest A."/>
            <person name="Koszul R."/>
            <person name="Lemaire M."/>
            <person name="Lesur I."/>
            <person name="Ma L."/>
            <person name="Muller H."/>
            <person name="Nicaud J.-M."/>
            <person name="Nikolski M."/>
            <person name="Oztas S."/>
            <person name="Ozier-Kalogeropoulos O."/>
            <person name="Pellenz S."/>
            <person name="Potier S."/>
            <person name="Richard G.-F."/>
            <person name="Straub M.-L."/>
            <person name="Suleau A."/>
            <person name="Swennen D."/>
            <person name="Tekaia F."/>
            <person name="Wesolowski-Louvel M."/>
            <person name="Westhof E."/>
            <person name="Wirth B."/>
            <person name="Zeniou-Meyer M."/>
            <person name="Zivanovic Y."/>
            <person name="Bolotin-Fukuhara M."/>
            <person name="Thierry A."/>
            <person name="Bouchier C."/>
            <person name="Caudron B."/>
            <person name="Scarpelli C."/>
            <person name="Gaillardin C."/>
            <person name="Weissenbach J."/>
            <person name="Wincker P."/>
            <person name="Souciet J.-L."/>
        </authorList>
    </citation>
    <scope>NUCLEOTIDE SEQUENCE [LARGE SCALE GENOMIC DNA]</scope>
    <source>
        <strain>CLIB 122 / E 150</strain>
    </source>
</reference>
<accession>Q6CI62</accession>
<protein>
    <recommendedName>
        <fullName>Histone chaperone ASF1</fullName>
    </recommendedName>
    <alternativeName>
        <fullName>Anti-silencing function protein 1</fullName>
    </alternativeName>
</protein>
<name>ASF1_YARLI</name>
<proteinExistence type="inferred from homology"/>
<comment type="function">
    <text evidence="1">Histone chaperone that facilitates histone deposition and histone exchange and removal during nucleosome assembly and disassembly.</text>
</comment>
<comment type="subunit">
    <text evidence="1">Interacts with histone H3 and histone H4.</text>
</comment>
<comment type="subcellular location">
    <subcellularLocation>
        <location evidence="1">Nucleus</location>
    </subcellularLocation>
</comment>
<comment type="similarity">
    <text evidence="3">Belongs to the ASF1 family.</text>
</comment>
<gene>
    <name type="primary">ASF1</name>
    <name type="ordered locus">YALI0A01375g</name>
</gene>